<protein>
    <recommendedName>
        <fullName evidence="1">Glutamate--tRNA ligase</fullName>
        <ecNumber evidence="1">6.1.1.17</ecNumber>
    </recommendedName>
    <alternativeName>
        <fullName evidence="1">Glutamyl-tRNA synthetase</fullName>
        <shortName evidence="1">GluRS</shortName>
    </alternativeName>
</protein>
<name>SYE_BDEBA</name>
<keyword id="KW-0030">Aminoacyl-tRNA synthetase</keyword>
<keyword id="KW-0067">ATP-binding</keyword>
<keyword id="KW-0963">Cytoplasm</keyword>
<keyword id="KW-0436">Ligase</keyword>
<keyword id="KW-0547">Nucleotide-binding</keyword>
<keyword id="KW-0648">Protein biosynthesis</keyword>
<keyword id="KW-1185">Reference proteome</keyword>
<organism>
    <name type="scientific">Bdellovibrio bacteriovorus (strain ATCC 15356 / DSM 50701 / NCIMB 9529 / HD100)</name>
    <dbReference type="NCBI Taxonomy" id="264462"/>
    <lineage>
        <taxon>Bacteria</taxon>
        <taxon>Pseudomonadati</taxon>
        <taxon>Bdellovibrionota</taxon>
        <taxon>Bdellovibrionia</taxon>
        <taxon>Bdellovibrionales</taxon>
        <taxon>Pseudobdellovibrionaceae</taxon>
        <taxon>Bdellovibrio</taxon>
    </lineage>
</organism>
<feature type="chain" id="PRO_0000119514" description="Glutamate--tRNA ligase">
    <location>
        <begin position="1"/>
        <end position="490"/>
    </location>
</feature>
<feature type="short sequence motif" description="'HIGH' region" evidence="1">
    <location>
        <begin position="15"/>
        <end position="25"/>
    </location>
</feature>
<feature type="short sequence motif" description="'KMSKS' region" evidence="1">
    <location>
        <begin position="259"/>
        <end position="263"/>
    </location>
</feature>
<feature type="binding site" evidence="1">
    <location>
        <position position="262"/>
    </location>
    <ligand>
        <name>ATP</name>
        <dbReference type="ChEBI" id="CHEBI:30616"/>
    </ligand>
</feature>
<proteinExistence type="inferred from homology"/>
<reference key="1">
    <citation type="journal article" date="2004" name="Science">
        <title>A predator unmasked: life cycle of Bdellovibrio bacteriovorus from a genomic perspective.</title>
        <authorList>
            <person name="Rendulic S."/>
            <person name="Jagtap P."/>
            <person name="Rosinus A."/>
            <person name="Eppinger M."/>
            <person name="Baar C."/>
            <person name="Lanz C."/>
            <person name="Keller H."/>
            <person name="Lambert C."/>
            <person name="Evans K.J."/>
            <person name="Goesmann A."/>
            <person name="Meyer F."/>
            <person name="Sockett R.E."/>
            <person name="Schuster S.C."/>
        </authorList>
    </citation>
    <scope>NUCLEOTIDE SEQUENCE [LARGE SCALE GENOMIC DNA]</scope>
    <source>
        <strain>ATCC 15356 / DSM 50701 / NCIMB 9529 / HD100</strain>
    </source>
</reference>
<sequence>MSSKISPHVRVRFAPSPTGYLHVGGARTALYNYLFAKKNGGEFILRIEDTDEARSTQESLRGVVDDLVWLGLKWDEGVDPVTLKDVGPNGPYRQSERLHIYKEIADQLLKEGKAYYCFMTEEDIEKQKAAAGSFAHLVSPYQDWTLDQALERLKTGDKAVVRFKTKNLVKDYIFTDLVRGEVKFPSDMVGDFVLLRSDGMPVYNFCCVVDDHLMKMTHVFRAEEHLPNTLRQLMIYEAMNWPTPEFGHMALILDEDRQKLSKRKGAVACGQLKDEGYLASAVLNFIALLGWSDPQGREILSVKDMLEVFDISRLNPSGAIFDRVKFKWMNAQHLRALPNAELWQAVAPFLARENMDLPTDPAWQSKSLDLFKPYMEILADAIELYRPLNDKSYVILPEADETLKWESTKAVLTSWKNLLQAHPSDYMTEEEFLKMQDEVKNQTGSKGKHLFMPIRVAVIGKPHGAELKTLVPLMKKSSLVARAEQALAKV</sequence>
<dbReference type="EC" id="6.1.1.17" evidence="1"/>
<dbReference type="EMBL" id="BX842652">
    <property type="protein sequence ID" value="CAE80141.1"/>
    <property type="molecule type" value="Genomic_DNA"/>
</dbReference>
<dbReference type="RefSeq" id="WP_011164743.1">
    <property type="nucleotide sequence ID" value="NC_005363.1"/>
</dbReference>
<dbReference type="SMR" id="Q6MKR6"/>
<dbReference type="STRING" id="264462.Bd2319"/>
<dbReference type="GeneID" id="93013245"/>
<dbReference type="KEGG" id="bba:Bd2319"/>
<dbReference type="eggNOG" id="COG0008">
    <property type="taxonomic scope" value="Bacteria"/>
</dbReference>
<dbReference type="HOGENOM" id="CLU_015768_6_3_7"/>
<dbReference type="Proteomes" id="UP000008080">
    <property type="component" value="Chromosome"/>
</dbReference>
<dbReference type="GO" id="GO:0005737">
    <property type="term" value="C:cytoplasm"/>
    <property type="evidence" value="ECO:0007669"/>
    <property type="project" value="UniProtKB-SubCell"/>
</dbReference>
<dbReference type="GO" id="GO:0005524">
    <property type="term" value="F:ATP binding"/>
    <property type="evidence" value="ECO:0007669"/>
    <property type="project" value="UniProtKB-UniRule"/>
</dbReference>
<dbReference type="GO" id="GO:0004818">
    <property type="term" value="F:glutamate-tRNA ligase activity"/>
    <property type="evidence" value="ECO:0007669"/>
    <property type="project" value="UniProtKB-UniRule"/>
</dbReference>
<dbReference type="GO" id="GO:0000049">
    <property type="term" value="F:tRNA binding"/>
    <property type="evidence" value="ECO:0007669"/>
    <property type="project" value="InterPro"/>
</dbReference>
<dbReference type="GO" id="GO:0008270">
    <property type="term" value="F:zinc ion binding"/>
    <property type="evidence" value="ECO:0007669"/>
    <property type="project" value="InterPro"/>
</dbReference>
<dbReference type="GO" id="GO:0006424">
    <property type="term" value="P:glutamyl-tRNA aminoacylation"/>
    <property type="evidence" value="ECO:0007669"/>
    <property type="project" value="UniProtKB-UniRule"/>
</dbReference>
<dbReference type="CDD" id="cd00808">
    <property type="entry name" value="GluRS_core"/>
    <property type="match status" value="1"/>
</dbReference>
<dbReference type="FunFam" id="3.40.50.620:FF:000045">
    <property type="entry name" value="Glutamate--tRNA ligase, mitochondrial"/>
    <property type="match status" value="1"/>
</dbReference>
<dbReference type="Gene3D" id="1.10.10.350">
    <property type="match status" value="1"/>
</dbReference>
<dbReference type="Gene3D" id="3.40.50.620">
    <property type="entry name" value="HUPs"/>
    <property type="match status" value="1"/>
</dbReference>
<dbReference type="HAMAP" id="MF_00022">
    <property type="entry name" value="Glu_tRNA_synth_type1"/>
    <property type="match status" value="1"/>
</dbReference>
<dbReference type="InterPro" id="IPR045462">
    <property type="entry name" value="aa-tRNA-synth_I_cd-bd"/>
</dbReference>
<dbReference type="InterPro" id="IPR020751">
    <property type="entry name" value="aa-tRNA-synth_I_codon-bd_sub2"/>
</dbReference>
<dbReference type="InterPro" id="IPR001412">
    <property type="entry name" value="aa-tRNA-synth_I_CS"/>
</dbReference>
<dbReference type="InterPro" id="IPR008925">
    <property type="entry name" value="aa_tRNA-synth_I_cd-bd_sf"/>
</dbReference>
<dbReference type="InterPro" id="IPR004527">
    <property type="entry name" value="Glu-tRNA-ligase_bac/mito"/>
</dbReference>
<dbReference type="InterPro" id="IPR000924">
    <property type="entry name" value="Glu/Gln-tRNA-synth"/>
</dbReference>
<dbReference type="InterPro" id="IPR020058">
    <property type="entry name" value="Glu/Gln-tRNA-synth_Ib_cat-dom"/>
</dbReference>
<dbReference type="InterPro" id="IPR049940">
    <property type="entry name" value="GluQ/Sye"/>
</dbReference>
<dbReference type="InterPro" id="IPR033910">
    <property type="entry name" value="GluRS_core"/>
</dbReference>
<dbReference type="InterPro" id="IPR014729">
    <property type="entry name" value="Rossmann-like_a/b/a_fold"/>
</dbReference>
<dbReference type="NCBIfam" id="TIGR00464">
    <property type="entry name" value="gltX_bact"/>
    <property type="match status" value="1"/>
</dbReference>
<dbReference type="PANTHER" id="PTHR43311">
    <property type="entry name" value="GLUTAMATE--TRNA LIGASE"/>
    <property type="match status" value="1"/>
</dbReference>
<dbReference type="PANTHER" id="PTHR43311:SF2">
    <property type="entry name" value="GLUTAMATE--TRNA LIGASE, MITOCHONDRIAL-RELATED"/>
    <property type="match status" value="1"/>
</dbReference>
<dbReference type="Pfam" id="PF19269">
    <property type="entry name" value="Anticodon_2"/>
    <property type="match status" value="1"/>
</dbReference>
<dbReference type="Pfam" id="PF00749">
    <property type="entry name" value="tRNA-synt_1c"/>
    <property type="match status" value="1"/>
</dbReference>
<dbReference type="PRINTS" id="PR00987">
    <property type="entry name" value="TRNASYNTHGLU"/>
</dbReference>
<dbReference type="SUPFAM" id="SSF48163">
    <property type="entry name" value="An anticodon-binding domain of class I aminoacyl-tRNA synthetases"/>
    <property type="match status" value="1"/>
</dbReference>
<dbReference type="SUPFAM" id="SSF52374">
    <property type="entry name" value="Nucleotidylyl transferase"/>
    <property type="match status" value="1"/>
</dbReference>
<dbReference type="PROSITE" id="PS00178">
    <property type="entry name" value="AA_TRNA_LIGASE_I"/>
    <property type="match status" value="1"/>
</dbReference>
<evidence type="ECO:0000255" key="1">
    <source>
        <dbReference type="HAMAP-Rule" id="MF_00022"/>
    </source>
</evidence>
<gene>
    <name evidence="1" type="primary">gltX</name>
    <name type="ordered locus">Bd2319</name>
</gene>
<accession>Q6MKR6</accession>
<comment type="function">
    <text evidence="1">Catalyzes the attachment of glutamate to tRNA(Glu) in a two-step reaction: glutamate is first activated by ATP to form Glu-AMP and then transferred to the acceptor end of tRNA(Glu).</text>
</comment>
<comment type="catalytic activity">
    <reaction evidence="1">
        <text>tRNA(Glu) + L-glutamate + ATP = L-glutamyl-tRNA(Glu) + AMP + diphosphate</text>
        <dbReference type="Rhea" id="RHEA:23540"/>
        <dbReference type="Rhea" id="RHEA-COMP:9663"/>
        <dbReference type="Rhea" id="RHEA-COMP:9680"/>
        <dbReference type="ChEBI" id="CHEBI:29985"/>
        <dbReference type="ChEBI" id="CHEBI:30616"/>
        <dbReference type="ChEBI" id="CHEBI:33019"/>
        <dbReference type="ChEBI" id="CHEBI:78442"/>
        <dbReference type="ChEBI" id="CHEBI:78520"/>
        <dbReference type="ChEBI" id="CHEBI:456215"/>
        <dbReference type="EC" id="6.1.1.17"/>
    </reaction>
</comment>
<comment type="subunit">
    <text evidence="1">Monomer.</text>
</comment>
<comment type="subcellular location">
    <subcellularLocation>
        <location evidence="1">Cytoplasm</location>
    </subcellularLocation>
</comment>
<comment type="similarity">
    <text evidence="1">Belongs to the class-I aminoacyl-tRNA synthetase family. Glutamate--tRNA ligase type 1 subfamily.</text>
</comment>